<sequence>MEVYEGKAKKMIPMDDDKFIMEFKDDATAFDGVKKAKFKGKGWLNAQISAKFFKLLEEHGIKTHFIGVAGDNKLIVEKLDMYPLEVVVRNVVAGSLKKRLPLPEGYELPEPIVELYYKSDELHDPMINYYHAKILGITLEEIKKMEEIALKVNEILKDYLAKRGIILVDFKLEFGKNKNGEIILADEISPDTCRFWDAETKKSLDKDVFRFDKGDLIEAYEELYRRITGEDPGN</sequence>
<reference key="1">
    <citation type="journal article" date="2003" name="Mol. Microbiol.">
        <title>An integrated analysis of the genome of the hyperthermophilic archaeon Pyrococcus abyssi.</title>
        <authorList>
            <person name="Cohen G.N."/>
            <person name="Barbe V."/>
            <person name="Flament D."/>
            <person name="Galperin M."/>
            <person name="Heilig R."/>
            <person name="Lecompte O."/>
            <person name="Poch O."/>
            <person name="Prieur D."/>
            <person name="Querellou J."/>
            <person name="Ripp R."/>
            <person name="Thierry J.-C."/>
            <person name="Van der Oost J."/>
            <person name="Weissenbach J."/>
            <person name="Zivanovic Y."/>
            <person name="Forterre P."/>
        </authorList>
    </citation>
    <scope>NUCLEOTIDE SEQUENCE [LARGE SCALE GENOMIC DNA]</scope>
    <source>
        <strain>GE5 / Orsay</strain>
    </source>
</reference>
<reference key="2">
    <citation type="journal article" date="2012" name="Curr. Microbiol.">
        <title>Re-annotation of two hyperthermophilic archaea Pyrococcus abyssi GE5 and Pyrococcus furiosus DSM 3638.</title>
        <authorList>
            <person name="Gao J."/>
            <person name="Wang J."/>
        </authorList>
    </citation>
    <scope>GENOME REANNOTATION</scope>
    <source>
        <strain>GE5 / Orsay</strain>
    </source>
</reference>
<comment type="catalytic activity">
    <reaction>
        <text>5-amino-1-(5-phospho-D-ribosyl)imidazole-4-carboxylate + L-aspartate + ATP = (2S)-2-[5-amino-1-(5-phospho-beta-D-ribosyl)imidazole-4-carboxamido]succinate + ADP + phosphate + 2 H(+)</text>
        <dbReference type="Rhea" id="RHEA:22628"/>
        <dbReference type="ChEBI" id="CHEBI:15378"/>
        <dbReference type="ChEBI" id="CHEBI:29991"/>
        <dbReference type="ChEBI" id="CHEBI:30616"/>
        <dbReference type="ChEBI" id="CHEBI:43474"/>
        <dbReference type="ChEBI" id="CHEBI:58443"/>
        <dbReference type="ChEBI" id="CHEBI:77657"/>
        <dbReference type="ChEBI" id="CHEBI:456216"/>
        <dbReference type="EC" id="6.3.2.6"/>
    </reaction>
</comment>
<comment type="pathway">
    <text>Purine metabolism; IMP biosynthesis via de novo pathway; 5-amino-1-(5-phospho-D-ribosyl)imidazole-4-carboxamide from 5-amino-1-(5-phospho-D-ribosyl)imidazole-4-carboxylate: step 1/2.</text>
</comment>
<comment type="similarity">
    <text evidence="1">Belongs to the SAICAR synthetase family.</text>
</comment>
<name>PUR7_PYRAB</name>
<feature type="chain" id="PRO_0000100913" description="Phosphoribosylaminoimidazole-succinocarboxamide synthase">
    <location>
        <begin position="1"/>
        <end position="234"/>
    </location>
</feature>
<organism>
    <name type="scientific">Pyrococcus abyssi (strain GE5 / Orsay)</name>
    <dbReference type="NCBI Taxonomy" id="272844"/>
    <lineage>
        <taxon>Archaea</taxon>
        <taxon>Methanobacteriati</taxon>
        <taxon>Methanobacteriota</taxon>
        <taxon>Thermococci</taxon>
        <taxon>Thermococcales</taxon>
        <taxon>Thermococcaceae</taxon>
        <taxon>Pyrococcus</taxon>
    </lineage>
</organism>
<dbReference type="EC" id="6.3.2.6"/>
<dbReference type="EMBL" id="AJ248283">
    <property type="protein sequence ID" value="CAB49144.1"/>
    <property type="molecule type" value="Genomic_DNA"/>
</dbReference>
<dbReference type="EMBL" id="HE613800">
    <property type="protein sequence ID" value="CCE69596.1"/>
    <property type="molecule type" value="Genomic_DNA"/>
</dbReference>
<dbReference type="PIR" id="A75212">
    <property type="entry name" value="A75212"/>
</dbReference>
<dbReference type="RefSeq" id="WP_010867344.1">
    <property type="nucleotide sequence ID" value="NC_000868.1"/>
</dbReference>
<dbReference type="SMR" id="Q9V254"/>
<dbReference type="STRING" id="272844.PAB2400"/>
<dbReference type="KEGG" id="pab:PAB2400"/>
<dbReference type="PATRIC" id="fig|272844.11.peg.236"/>
<dbReference type="eggNOG" id="arCOG04421">
    <property type="taxonomic scope" value="Archaea"/>
</dbReference>
<dbReference type="HOGENOM" id="CLU_061495_2_0_2"/>
<dbReference type="OrthoDB" id="10775at2157"/>
<dbReference type="UniPathway" id="UPA00074">
    <property type="reaction ID" value="UER00131"/>
</dbReference>
<dbReference type="Proteomes" id="UP000000810">
    <property type="component" value="Chromosome"/>
</dbReference>
<dbReference type="Proteomes" id="UP000009139">
    <property type="component" value="Chromosome"/>
</dbReference>
<dbReference type="GO" id="GO:0005524">
    <property type="term" value="F:ATP binding"/>
    <property type="evidence" value="ECO:0007669"/>
    <property type="project" value="UniProtKB-KW"/>
</dbReference>
<dbReference type="GO" id="GO:0004639">
    <property type="term" value="F:phosphoribosylaminoimidazolesuccinocarboxamide synthase activity"/>
    <property type="evidence" value="ECO:0007669"/>
    <property type="project" value="UniProtKB-UniRule"/>
</dbReference>
<dbReference type="GO" id="GO:0006189">
    <property type="term" value="P:'de novo' IMP biosynthetic process"/>
    <property type="evidence" value="ECO:0007669"/>
    <property type="project" value="UniProtKB-UniRule"/>
</dbReference>
<dbReference type="GO" id="GO:0009236">
    <property type="term" value="P:cobalamin biosynthetic process"/>
    <property type="evidence" value="ECO:0007669"/>
    <property type="project" value="InterPro"/>
</dbReference>
<dbReference type="CDD" id="cd01415">
    <property type="entry name" value="SAICAR_synt_PurC"/>
    <property type="match status" value="1"/>
</dbReference>
<dbReference type="FunFam" id="3.30.200.20:FF:000086">
    <property type="entry name" value="Phosphoribosylaminoimidazole-succinocarboxamide synthase"/>
    <property type="match status" value="1"/>
</dbReference>
<dbReference type="FunFam" id="3.30.470.20:FF:000006">
    <property type="entry name" value="Phosphoribosylaminoimidazole-succinocarboxamide synthase"/>
    <property type="match status" value="1"/>
</dbReference>
<dbReference type="Gene3D" id="3.30.470.20">
    <property type="entry name" value="ATP-grasp fold, B domain"/>
    <property type="match status" value="1"/>
</dbReference>
<dbReference type="Gene3D" id="3.30.200.20">
    <property type="entry name" value="Phosphorylase Kinase, domain 1"/>
    <property type="match status" value="1"/>
</dbReference>
<dbReference type="HAMAP" id="MF_00137">
    <property type="entry name" value="SAICAR_synth"/>
    <property type="match status" value="1"/>
</dbReference>
<dbReference type="InterPro" id="IPR028923">
    <property type="entry name" value="SAICAR_synt/ADE2_N"/>
</dbReference>
<dbReference type="InterPro" id="IPR033934">
    <property type="entry name" value="SAICAR_synt_PurC"/>
</dbReference>
<dbReference type="InterPro" id="IPR001636">
    <property type="entry name" value="SAICAR_synth"/>
</dbReference>
<dbReference type="InterPro" id="IPR050089">
    <property type="entry name" value="SAICAR_synthetase"/>
</dbReference>
<dbReference type="InterPro" id="IPR018236">
    <property type="entry name" value="SAICAR_synthetase_CS"/>
</dbReference>
<dbReference type="NCBIfam" id="TIGR00081">
    <property type="entry name" value="purC"/>
    <property type="match status" value="1"/>
</dbReference>
<dbReference type="PANTHER" id="PTHR43599">
    <property type="entry name" value="MULTIFUNCTIONAL PROTEIN ADE2"/>
    <property type="match status" value="1"/>
</dbReference>
<dbReference type="PANTHER" id="PTHR43599:SF3">
    <property type="entry name" value="SI:DKEY-6E2.2"/>
    <property type="match status" value="1"/>
</dbReference>
<dbReference type="Pfam" id="PF01259">
    <property type="entry name" value="SAICAR_synt"/>
    <property type="match status" value="1"/>
</dbReference>
<dbReference type="SUPFAM" id="SSF56104">
    <property type="entry name" value="SAICAR synthase-like"/>
    <property type="match status" value="1"/>
</dbReference>
<dbReference type="PROSITE" id="PS01057">
    <property type="entry name" value="SAICAR_SYNTHETASE_1"/>
    <property type="match status" value="1"/>
</dbReference>
<dbReference type="PROSITE" id="PS01058">
    <property type="entry name" value="SAICAR_SYNTHETASE_2"/>
    <property type="match status" value="1"/>
</dbReference>
<proteinExistence type="inferred from homology"/>
<accession>Q9V254</accession>
<accession>G8ZG55</accession>
<keyword id="KW-0067">ATP-binding</keyword>
<keyword id="KW-0436">Ligase</keyword>
<keyword id="KW-0547">Nucleotide-binding</keyword>
<keyword id="KW-0658">Purine biosynthesis</keyword>
<evidence type="ECO:0000305" key="1"/>
<gene>
    <name type="primary">purC</name>
    <name type="ordered locus">PYRAB02200</name>
    <name type="ORF">PAB2400</name>
</gene>
<protein>
    <recommendedName>
        <fullName>Phosphoribosylaminoimidazole-succinocarboxamide synthase</fullName>
        <ecNumber>6.3.2.6</ecNumber>
    </recommendedName>
    <alternativeName>
        <fullName>SAICAR synthetase</fullName>
    </alternativeName>
</protein>